<evidence type="ECO:0000255" key="1">
    <source>
        <dbReference type="HAMAP-Rule" id="MF_01002"/>
    </source>
</evidence>
<reference key="1">
    <citation type="journal article" date="2009" name="BMC Genomics">
        <title>Pseudogene accumulation in the evolutionary histories of Salmonella enterica serovars Paratyphi A and Typhi.</title>
        <authorList>
            <person name="Holt K.E."/>
            <person name="Thomson N.R."/>
            <person name="Wain J."/>
            <person name="Langridge G.C."/>
            <person name="Hasan R."/>
            <person name="Bhutta Z.A."/>
            <person name="Quail M.A."/>
            <person name="Norbertczak H."/>
            <person name="Walker D."/>
            <person name="Simmonds M."/>
            <person name="White B."/>
            <person name="Bason N."/>
            <person name="Mungall K."/>
            <person name="Dougan G."/>
            <person name="Parkhill J."/>
        </authorList>
    </citation>
    <scope>NUCLEOTIDE SEQUENCE [LARGE SCALE GENOMIC DNA]</scope>
    <source>
        <strain>AKU_12601</strain>
    </source>
</reference>
<feature type="chain" id="PRO_1000134609" description="TDP-N-acetylfucosamine:lipid II N-acetylfucosaminyltransferase">
    <location>
        <begin position="1"/>
        <end position="359"/>
    </location>
</feature>
<keyword id="KW-0997">Cell inner membrane</keyword>
<keyword id="KW-1003">Cell membrane</keyword>
<keyword id="KW-0328">Glycosyltransferase</keyword>
<keyword id="KW-0472">Membrane</keyword>
<keyword id="KW-0808">Transferase</keyword>
<dbReference type="EC" id="2.4.1.325" evidence="1"/>
<dbReference type="EMBL" id="FM200053">
    <property type="protein sequence ID" value="CAR61789.1"/>
    <property type="molecule type" value="Genomic_DNA"/>
</dbReference>
<dbReference type="RefSeq" id="WP_000217201.1">
    <property type="nucleotide sequence ID" value="NC_011147.1"/>
</dbReference>
<dbReference type="SMR" id="B5BIU1"/>
<dbReference type="CAZy" id="GT56">
    <property type="family name" value="Glycosyltransferase Family 56"/>
</dbReference>
<dbReference type="KEGG" id="sek:SSPA3511"/>
<dbReference type="HOGENOM" id="CLU_066584_0_0_6"/>
<dbReference type="UniPathway" id="UPA00566"/>
<dbReference type="Proteomes" id="UP000001869">
    <property type="component" value="Chromosome"/>
</dbReference>
<dbReference type="GO" id="GO:0005886">
    <property type="term" value="C:plasma membrane"/>
    <property type="evidence" value="ECO:0007669"/>
    <property type="project" value="UniProtKB-SubCell"/>
</dbReference>
<dbReference type="GO" id="GO:0102031">
    <property type="term" value="F:4-acetamido-4,6-dideoxy-D-galactose transferase activity"/>
    <property type="evidence" value="ECO:0007669"/>
    <property type="project" value="UniProtKB-EC"/>
</dbReference>
<dbReference type="GO" id="GO:0008417">
    <property type="term" value="F:fucosyltransferase activity"/>
    <property type="evidence" value="ECO:0007669"/>
    <property type="project" value="InterPro"/>
</dbReference>
<dbReference type="GO" id="GO:0009246">
    <property type="term" value="P:enterobacterial common antigen biosynthetic process"/>
    <property type="evidence" value="ECO:0007669"/>
    <property type="project" value="UniProtKB-UniRule"/>
</dbReference>
<dbReference type="GO" id="GO:0036065">
    <property type="term" value="P:fucosylation"/>
    <property type="evidence" value="ECO:0007669"/>
    <property type="project" value="InterPro"/>
</dbReference>
<dbReference type="HAMAP" id="MF_01002">
    <property type="entry name" value="WecF_RffT"/>
    <property type="match status" value="1"/>
</dbReference>
<dbReference type="InterPro" id="IPR009993">
    <property type="entry name" value="WecF"/>
</dbReference>
<dbReference type="NCBIfam" id="NF002753">
    <property type="entry name" value="PRK02797.1-2"/>
    <property type="match status" value="1"/>
</dbReference>
<dbReference type="NCBIfam" id="NF002754">
    <property type="entry name" value="PRK02797.1-3"/>
    <property type="match status" value="1"/>
</dbReference>
<dbReference type="Pfam" id="PF07429">
    <property type="entry name" value="Glyco_transf_56"/>
    <property type="match status" value="1"/>
</dbReference>
<comment type="function">
    <text evidence="1">Catalyzes the synthesis of Und-PP-GlcNAc-ManNAcA-Fuc4NAc (Lipid III), the third lipid-linked intermediate involved in ECA synthesis.</text>
</comment>
<comment type="catalytic activity">
    <reaction evidence="1">
        <text>beta-D-ManNAcA-(1-&gt;4)-alpha-D-GlcNAc-di-trans,octa-cis-undecaprenyl diphosphate + dTDP-4-acetamido-4,6-dideoxy-alpha-D-galactose = alpha-D-FucNAc4-(1-&gt;4)-beta-D-ManNAcA-(1-&gt;4)-D-GlcNAc-undecaprenyl diphosphate + dTDP + H(+)</text>
        <dbReference type="Rhea" id="RHEA:28759"/>
        <dbReference type="ChEBI" id="CHEBI:15378"/>
        <dbReference type="ChEBI" id="CHEBI:58369"/>
        <dbReference type="ChEBI" id="CHEBI:61495"/>
        <dbReference type="ChEBI" id="CHEBI:61496"/>
        <dbReference type="ChEBI" id="CHEBI:68493"/>
        <dbReference type="EC" id="2.4.1.325"/>
    </reaction>
</comment>
<comment type="pathway">
    <text evidence="1">Bacterial outer membrane biogenesis; enterobacterial common antigen biosynthesis.</text>
</comment>
<comment type="subcellular location">
    <subcellularLocation>
        <location evidence="1">Cell inner membrane</location>
        <topology evidence="1">Peripheral membrane protein</topology>
    </subcellularLocation>
</comment>
<comment type="similarity">
    <text evidence="1">Belongs to the glycosyltransferase 56 family.</text>
</comment>
<sequence length="359" mass="40418">MTVLIHVLGSDIPHHNHTVLRFFNDTLAATSEHAREFMVAGEDNGFTESCPALSLRFYGSKKALAQAVIAKAKANRRQRFFFHGQFNTSLWLALLSGGIKPAQFYWHIWGADLYEVSNGLKFRLFYPLRRIAQGRVGGVFATRGDLSYFARQHPGVRGELLYFPTRMDPSLNAMAKERQRAGKLTILVGNSGDRSNQHIAALRAVYQQFGDTVNVVVPMGYPANNQAYIDEVRQAGLALFSAENLQILSEKMEFDAYLALLRQCDLGYFIFARQQGIGTLCLLIQADIPCVLNRDNPFWQDMAEQHLPVLFTTDDLNEQVVREAQRQLASVDKSGITFFSPNYLQPWHNALRIAAGEAE</sequence>
<proteinExistence type="inferred from homology"/>
<protein>
    <recommendedName>
        <fullName evidence="1">TDP-N-acetylfucosamine:lipid II N-acetylfucosaminyltransferase</fullName>
        <ecNumber evidence="1">2.4.1.325</ecNumber>
    </recommendedName>
    <alternativeName>
        <fullName evidence="1">4-alpha-L-fucosyltransferase</fullName>
    </alternativeName>
    <alternativeName>
        <fullName evidence="1">TDP-Fuc4NAc:lipid II Fuc4NAc transferase</fullName>
        <shortName evidence="1">Fuc4NAc transferase</shortName>
    </alternativeName>
</protein>
<organism>
    <name type="scientific">Salmonella paratyphi A (strain AKU_12601)</name>
    <dbReference type="NCBI Taxonomy" id="554290"/>
    <lineage>
        <taxon>Bacteria</taxon>
        <taxon>Pseudomonadati</taxon>
        <taxon>Pseudomonadota</taxon>
        <taxon>Gammaproteobacteria</taxon>
        <taxon>Enterobacterales</taxon>
        <taxon>Enterobacteriaceae</taxon>
        <taxon>Salmonella</taxon>
    </lineage>
</organism>
<accession>B5BIU1</accession>
<name>WECF_SALPK</name>
<gene>
    <name evidence="1" type="primary">wecF</name>
    <name evidence="1" type="synonym">rffT</name>
    <name type="ordered locus">SSPA3511</name>
</gene>